<dbReference type="EMBL" id="KY940276">
    <property type="protein sequence ID" value="ASZ00240.1"/>
    <property type="molecule type" value="mRNA"/>
</dbReference>
<dbReference type="VEuPathDB" id="FungiDB:CCR75_008983"/>
<dbReference type="GO" id="GO:0005576">
    <property type="term" value="C:extracellular region"/>
    <property type="evidence" value="ECO:0007669"/>
    <property type="project" value="UniProtKB-SubCell"/>
</dbReference>
<dbReference type="GO" id="GO:0043657">
    <property type="term" value="C:host cell"/>
    <property type="evidence" value="ECO:0007669"/>
    <property type="project" value="UniProtKB-SubCell"/>
</dbReference>
<organism>
    <name type="scientific">Bremia lactucae</name>
    <name type="common">Lettuce downy mildew</name>
    <dbReference type="NCBI Taxonomy" id="4779"/>
    <lineage>
        <taxon>Eukaryota</taxon>
        <taxon>Sar</taxon>
        <taxon>Stramenopiles</taxon>
        <taxon>Oomycota</taxon>
        <taxon>Peronosporales</taxon>
        <taxon>Peronosporaceae</taxon>
        <taxon>Bremia</taxon>
    </lineage>
</organism>
<evidence type="ECO:0000255" key="1"/>
<evidence type="ECO:0000269" key="2">
    <source>
    </source>
</evidence>
<evidence type="ECO:0000303" key="3">
    <source>
    </source>
</evidence>
<evidence type="ECO:0000305" key="4"/>
<evidence type="ECO:0000305" key="5">
    <source>
    </source>
</evidence>
<proteinExistence type="evidence at transcript level"/>
<keyword id="KW-0964">Secreted</keyword>
<keyword id="KW-0732">Signal</keyword>
<comment type="function">
    <text evidence="2">Secreted effector that triggers a hypersensitive response (HR) in 3 Lactuca saligna accessions (CGN05947, CGN05310, CGN05304).</text>
</comment>
<comment type="subcellular location">
    <subcellularLocation>
        <location evidence="5">Secreted</location>
    </subcellularLocation>
    <subcellularLocation>
        <location evidence="5">Host cell</location>
    </subcellularLocation>
</comment>
<comment type="induction">
    <text evidence="2">Expressed during host plant infection.</text>
</comment>
<comment type="domain">
    <text evidence="5">The RxLR-dEER motif acts to carry the protein into the host cell cytoplasm through binding to cell surface phosphatidylinositol-3-phosphate.</text>
</comment>
<comment type="similarity">
    <text evidence="4">Belongs to the RxLR effector family.</text>
</comment>
<accession>A0A286SC82</accession>
<name>BLR31_BRELC</name>
<gene>
    <name evidence="3" type="primary">BLR31</name>
</gene>
<feature type="signal peptide" evidence="1">
    <location>
        <begin position="1"/>
        <end position="22"/>
    </location>
</feature>
<feature type="chain" id="PRO_5012809571" description="RxLR effector protein BLR31" evidence="1">
    <location>
        <begin position="23"/>
        <end position="126"/>
    </location>
</feature>
<feature type="short sequence motif" description="RxLR-dEER" evidence="5">
    <location>
        <begin position="44"/>
        <end position="58"/>
    </location>
</feature>
<sequence>MLLSRAISVLALLACIRCGVHAQNTEQNLKTQLTTDSAMITSQRLLRTSVDFKDSEERWPTESSRIRSAIKDYFREFPEKVSIAMAIRQIDAHGVRHVEKVLSQYKFPAADQGNIRLAIIHHKAPK</sequence>
<reference key="1">
    <citation type="journal article" date="2017" name="New Phytol.">
        <title>Effector-mediated discovery of a novel resistance gene against Bremia lactucae in a nonhost lettuce species.</title>
        <authorList>
            <person name="Giesbers A.K.J."/>
            <person name="Pelgrom A.J.E."/>
            <person name="Visser R.G.F."/>
            <person name="Niks R.E."/>
            <person name="Van den Ackerveken G."/>
            <person name="Jeuken M.J.W."/>
        </authorList>
    </citation>
    <scope>NUCLEOTIDE SEQUENCE [MRNA]</scope>
    <scope>DOMAIN</scope>
    <scope>INDUCTION</scope>
    <scope>FUNCTION</scope>
    <source>
        <strain>Race Bl:24</strain>
    </source>
</reference>
<protein>
    <recommendedName>
        <fullName evidence="3">RxLR effector protein BLR31</fullName>
    </recommendedName>
</protein>